<sequence length="228" mass="25681">MRILVVDDDRAVRESLRRSLSFNGYSVELAHDGVEALDMIASDRPDALVLDVMMPRLDGLEVCRQLRSTGDDLPILVLTARDSVSERVAGLDAGADDYLPKPFALEELLARMRALLRRTKPEDDAESVAMTFSDLTLDPVTREVTRGQRRISLTRTEFALLEMLIANPRRVLTRSRILEEVWGFDFPTSGNALEVYVGYLRRKTEADGEPRLIHTVRGVGYVLRETPP</sequence>
<dbReference type="EMBL" id="AE016958">
    <property type="protein sequence ID" value="AAS03233.1"/>
    <property type="molecule type" value="Genomic_DNA"/>
</dbReference>
<dbReference type="RefSeq" id="WP_003872811.1">
    <property type="nucleotide sequence ID" value="NZ_CP106873.1"/>
</dbReference>
<dbReference type="SMR" id="Q742C1"/>
<dbReference type="STRING" id="262316.MAP_0916"/>
<dbReference type="GeneID" id="75268895"/>
<dbReference type="KEGG" id="mpa:MAP_0916"/>
<dbReference type="eggNOG" id="COG0745">
    <property type="taxonomic scope" value="Bacteria"/>
</dbReference>
<dbReference type="HOGENOM" id="CLU_000445_30_1_11"/>
<dbReference type="Proteomes" id="UP000000580">
    <property type="component" value="Chromosome"/>
</dbReference>
<dbReference type="GO" id="GO:0005829">
    <property type="term" value="C:cytosol"/>
    <property type="evidence" value="ECO:0007669"/>
    <property type="project" value="TreeGrafter"/>
</dbReference>
<dbReference type="GO" id="GO:0032993">
    <property type="term" value="C:protein-DNA complex"/>
    <property type="evidence" value="ECO:0007669"/>
    <property type="project" value="TreeGrafter"/>
</dbReference>
<dbReference type="GO" id="GO:0000156">
    <property type="term" value="F:phosphorelay response regulator activity"/>
    <property type="evidence" value="ECO:0007669"/>
    <property type="project" value="TreeGrafter"/>
</dbReference>
<dbReference type="GO" id="GO:0000976">
    <property type="term" value="F:transcription cis-regulatory region binding"/>
    <property type="evidence" value="ECO:0007669"/>
    <property type="project" value="TreeGrafter"/>
</dbReference>
<dbReference type="GO" id="GO:0006355">
    <property type="term" value="P:regulation of DNA-templated transcription"/>
    <property type="evidence" value="ECO:0007669"/>
    <property type="project" value="InterPro"/>
</dbReference>
<dbReference type="CDD" id="cd17627">
    <property type="entry name" value="REC_OmpR_PrrA-like"/>
    <property type="match status" value="1"/>
</dbReference>
<dbReference type="CDD" id="cd00383">
    <property type="entry name" value="trans_reg_C"/>
    <property type="match status" value="1"/>
</dbReference>
<dbReference type="FunFam" id="3.40.50.2300:FF:000001">
    <property type="entry name" value="DNA-binding response regulator PhoB"/>
    <property type="match status" value="1"/>
</dbReference>
<dbReference type="FunFam" id="1.10.10.10:FF:000005">
    <property type="entry name" value="Two-component system response regulator"/>
    <property type="match status" value="1"/>
</dbReference>
<dbReference type="Gene3D" id="3.40.50.2300">
    <property type="match status" value="1"/>
</dbReference>
<dbReference type="Gene3D" id="6.10.250.690">
    <property type="match status" value="1"/>
</dbReference>
<dbReference type="Gene3D" id="1.10.10.10">
    <property type="entry name" value="Winged helix-like DNA-binding domain superfamily/Winged helix DNA-binding domain"/>
    <property type="match status" value="1"/>
</dbReference>
<dbReference type="InterPro" id="IPR011006">
    <property type="entry name" value="CheY-like_superfamily"/>
</dbReference>
<dbReference type="InterPro" id="IPR001867">
    <property type="entry name" value="OmpR/PhoB-type_DNA-bd"/>
</dbReference>
<dbReference type="InterPro" id="IPR001789">
    <property type="entry name" value="Sig_transdc_resp-reg_receiver"/>
</dbReference>
<dbReference type="InterPro" id="IPR039420">
    <property type="entry name" value="WalR-like"/>
</dbReference>
<dbReference type="InterPro" id="IPR036388">
    <property type="entry name" value="WH-like_DNA-bd_sf"/>
</dbReference>
<dbReference type="PANTHER" id="PTHR48111">
    <property type="entry name" value="REGULATOR OF RPOS"/>
    <property type="match status" value="1"/>
</dbReference>
<dbReference type="PANTHER" id="PTHR48111:SF22">
    <property type="entry name" value="REGULATOR OF RPOS"/>
    <property type="match status" value="1"/>
</dbReference>
<dbReference type="Pfam" id="PF00072">
    <property type="entry name" value="Response_reg"/>
    <property type="match status" value="1"/>
</dbReference>
<dbReference type="Pfam" id="PF00486">
    <property type="entry name" value="Trans_reg_C"/>
    <property type="match status" value="1"/>
</dbReference>
<dbReference type="SMART" id="SM00448">
    <property type="entry name" value="REC"/>
    <property type="match status" value="1"/>
</dbReference>
<dbReference type="SMART" id="SM00862">
    <property type="entry name" value="Trans_reg_C"/>
    <property type="match status" value="1"/>
</dbReference>
<dbReference type="SUPFAM" id="SSF52172">
    <property type="entry name" value="CheY-like"/>
    <property type="match status" value="1"/>
</dbReference>
<dbReference type="PROSITE" id="PS51755">
    <property type="entry name" value="OMPR_PHOB"/>
    <property type="match status" value="1"/>
</dbReference>
<dbReference type="PROSITE" id="PS50110">
    <property type="entry name" value="RESPONSE_REGULATORY"/>
    <property type="match status" value="1"/>
</dbReference>
<keyword id="KW-0963">Cytoplasm</keyword>
<keyword id="KW-0238">DNA-binding</keyword>
<keyword id="KW-0597">Phosphoprotein</keyword>
<keyword id="KW-1185">Reference proteome</keyword>
<keyword id="KW-0346">Stress response</keyword>
<keyword id="KW-0804">Transcription</keyword>
<keyword id="KW-0805">Transcription regulation</keyword>
<keyword id="KW-0902">Two-component regulatory system</keyword>
<keyword id="KW-0843">Virulence</keyword>
<protein>
    <recommendedName>
        <fullName>Response regulator MprA</fullName>
    </recommendedName>
    <alternativeName>
        <fullName>Mycobacterial persistence regulator A</fullName>
    </alternativeName>
</protein>
<gene>
    <name type="primary">mprA</name>
    <name type="ordered locus">MAP_0916</name>
</gene>
<comment type="function">
    <text evidence="1">Member of the two-component regulatory system MprB/MprA which contributes to maintaining a balance among several systems involved in stress resistance and is required for establishment and maintenance of persistent infection in the host. Functions as a transcriptional regulator that recognizes a 19-bp nucleotide motif comprizing two loosely conserved 8-bp direct DNA-binding motif repeats separated by a 3-bp spacer region (By similarity).</text>
</comment>
<comment type="subcellular location">
    <subcellularLocation>
        <location evidence="4">Cytoplasm</location>
    </subcellularLocation>
</comment>
<comment type="PTM">
    <text evidence="1">Phosphorylated and dephosphorylated by MprB.</text>
</comment>
<proteinExistence type="inferred from homology"/>
<name>MPRA_MYCPA</name>
<reference key="1">
    <citation type="journal article" date="2005" name="Proc. Natl. Acad. Sci. U.S.A.">
        <title>The complete genome sequence of Mycobacterium avium subspecies paratuberculosis.</title>
        <authorList>
            <person name="Li L."/>
            <person name="Bannantine J.P."/>
            <person name="Zhang Q."/>
            <person name="Amonsin A."/>
            <person name="May B.J."/>
            <person name="Alt D."/>
            <person name="Banerji N."/>
            <person name="Kanjilal S."/>
            <person name="Kapur V."/>
        </authorList>
    </citation>
    <scope>NUCLEOTIDE SEQUENCE [LARGE SCALE GENOMIC DNA]</scope>
    <source>
        <strain>ATCC BAA-968 / K-10</strain>
    </source>
</reference>
<feature type="chain" id="PRO_0000308422" description="Response regulator MprA">
    <location>
        <begin position="1"/>
        <end position="228"/>
    </location>
</feature>
<feature type="domain" description="Response regulatory" evidence="2">
    <location>
        <begin position="2"/>
        <end position="116"/>
    </location>
</feature>
<feature type="DNA-binding region" description="OmpR/PhoB-type" evidence="3">
    <location>
        <begin position="127"/>
        <end position="225"/>
    </location>
</feature>
<feature type="modified residue" description="4-aspartylphosphate" evidence="2">
    <location>
        <position position="46"/>
    </location>
</feature>
<evidence type="ECO:0000250" key="1"/>
<evidence type="ECO:0000255" key="2">
    <source>
        <dbReference type="PROSITE-ProRule" id="PRU00169"/>
    </source>
</evidence>
<evidence type="ECO:0000255" key="3">
    <source>
        <dbReference type="PROSITE-ProRule" id="PRU01091"/>
    </source>
</evidence>
<evidence type="ECO:0000305" key="4"/>
<accession>Q742C1</accession>
<organism>
    <name type="scientific">Mycolicibacterium paratuberculosis (strain ATCC BAA-968 / K-10)</name>
    <name type="common">Mycobacterium paratuberculosis</name>
    <dbReference type="NCBI Taxonomy" id="262316"/>
    <lineage>
        <taxon>Bacteria</taxon>
        <taxon>Bacillati</taxon>
        <taxon>Actinomycetota</taxon>
        <taxon>Actinomycetes</taxon>
        <taxon>Mycobacteriales</taxon>
        <taxon>Mycobacteriaceae</taxon>
        <taxon>Mycobacterium</taxon>
        <taxon>Mycobacterium avium complex (MAC)</taxon>
    </lineage>
</organism>